<feature type="initiator methionine" description="Removed" evidence="1">
    <location>
        <position position="1"/>
    </location>
</feature>
<feature type="chain" id="PRO_1000201581" description="Tautomerase PptA">
    <location>
        <begin position="2"/>
        <end position="75"/>
    </location>
</feature>
<feature type="active site" description="Proton acceptor; via imino nitrogen" evidence="1">
    <location>
        <position position="2"/>
    </location>
</feature>
<proteinExistence type="inferred from homology"/>
<organism>
    <name type="scientific">Klebsiella pneumoniae (strain 342)</name>
    <dbReference type="NCBI Taxonomy" id="507522"/>
    <lineage>
        <taxon>Bacteria</taxon>
        <taxon>Pseudomonadati</taxon>
        <taxon>Pseudomonadota</taxon>
        <taxon>Gammaproteobacteria</taxon>
        <taxon>Enterobacterales</taxon>
        <taxon>Enterobacteriaceae</taxon>
        <taxon>Klebsiella/Raoultella group</taxon>
        <taxon>Klebsiella</taxon>
        <taxon>Klebsiella pneumoniae complex</taxon>
    </lineage>
</organism>
<reference key="1">
    <citation type="journal article" date="2008" name="PLoS Genet.">
        <title>Complete genome sequence of the N2-fixing broad host range endophyte Klebsiella pneumoniae 342 and virulence predictions verified in mice.</title>
        <authorList>
            <person name="Fouts D.E."/>
            <person name="Tyler H.L."/>
            <person name="DeBoy R.T."/>
            <person name="Daugherty S."/>
            <person name="Ren Q."/>
            <person name="Badger J.H."/>
            <person name="Durkin A.S."/>
            <person name="Huot H."/>
            <person name="Shrivastava S."/>
            <person name="Kothari S."/>
            <person name="Dodson R.J."/>
            <person name="Mohamoud Y."/>
            <person name="Khouri H."/>
            <person name="Roesch L.F.W."/>
            <person name="Krogfelt K.A."/>
            <person name="Struve C."/>
            <person name="Triplett E.W."/>
            <person name="Methe B.A."/>
        </authorList>
    </citation>
    <scope>NUCLEOTIDE SEQUENCE [LARGE SCALE GENOMIC DNA]</scope>
    <source>
        <strain>342</strain>
    </source>
</reference>
<keyword id="KW-0963">Cytoplasm</keyword>
<keyword id="KW-0413">Isomerase</keyword>
<sequence>MPHVDIKCFPRELTDEQKTALAADITEVLIRHLNSKESAVSVALTQVEPDAWQAVWDSEIAPQMAQLIKKPGYSM</sequence>
<name>PPTA_KLEP3</name>
<comment type="subunit">
    <text evidence="1">Homodimer.</text>
</comment>
<comment type="subcellular location">
    <subcellularLocation>
        <location evidence="1">Cytoplasm</location>
    </subcellularLocation>
</comment>
<comment type="similarity">
    <text evidence="1">Belongs to the 4-oxalocrotonate tautomerase family. PptA subfamily.</text>
</comment>
<accession>B5XWY0</accession>
<gene>
    <name evidence="1" type="primary">pptA</name>
    <name type="ordered locus">KPK_2463</name>
</gene>
<protein>
    <recommendedName>
        <fullName evidence="1">Tautomerase PptA</fullName>
        <ecNumber evidence="1">5.3.2.-</ecNumber>
    </recommendedName>
</protein>
<evidence type="ECO:0000255" key="1">
    <source>
        <dbReference type="HAMAP-Rule" id="MF_00718"/>
    </source>
</evidence>
<dbReference type="EC" id="5.3.2.-" evidence="1"/>
<dbReference type="EMBL" id="CP000964">
    <property type="protein sequence ID" value="ACI10406.1"/>
    <property type="molecule type" value="Genomic_DNA"/>
</dbReference>
<dbReference type="SMR" id="B5XWY0"/>
<dbReference type="KEGG" id="kpe:KPK_2463"/>
<dbReference type="HOGENOM" id="CLU_183611_0_1_6"/>
<dbReference type="Proteomes" id="UP000001734">
    <property type="component" value="Chromosome"/>
</dbReference>
<dbReference type="GO" id="GO:0005737">
    <property type="term" value="C:cytoplasm"/>
    <property type="evidence" value="ECO:0007669"/>
    <property type="project" value="UniProtKB-SubCell"/>
</dbReference>
<dbReference type="GO" id="GO:0016862">
    <property type="term" value="F:intramolecular oxidoreductase activity, interconverting keto- and enol-groups"/>
    <property type="evidence" value="ECO:0007669"/>
    <property type="project" value="UniProtKB-UniRule"/>
</dbReference>
<dbReference type="Gene3D" id="3.30.429.10">
    <property type="entry name" value="Macrophage Migration Inhibitory Factor"/>
    <property type="match status" value="1"/>
</dbReference>
<dbReference type="HAMAP" id="MF_00718">
    <property type="entry name" value="Tautomerase_PptA"/>
    <property type="match status" value="1"/>
</dbReference>
<dbReference type="InterPro" id="IPR004370">
    <property type="entry name" value="4-OT-like_dom"/>
</dbReference>
<dbReference type="InterPro" id="IPR014347">
    <property type="entry name" value="Tautomerase/MIF_sf"/>
</dbReference>
<dbReference type="InterPro" id="IPR017284">
    <property type="entry name" value="Tautomerase_PptA"/>
</dbReference>
<dbReference type="NCBIfam" id="NF002324">
    <property type="entry name" value="PRK01271.1"/>
    <property type="match status" value="1"/>
</dbReference>
<dbReference type="Pfam" id="PF01361">
    <property type="entry name" value="Tautomerase"/>
    <property type="match status" value="1"/>
</dbReference>
<dbReference type="PIRSF" id="PIRSF037799">
    <property type="entry name" value="Tautomer_YdcE_prd"/>
    <property type="match status" value="1"/>
</dbReference>
<dbReference type="SUPFAM" id="SSF55331">
    <property type="entry name" value="Tautomerase/MIF"/>
    <property type="match status" value="1"/>
</dbReference>